<sequence length="453" mass="51682">MQAIAKNDIKTGTVVDLTHEGHGVVKIDRFPIFIPQALINEQIEYKIIKVKKNFAIGKLLNINTRSENRVAPPCIYYERCGGCQLQHLSYEAQLEMKKEQVINLFQRKAHFDNSKINDTVGMTDPWRYRNKSQIPVGKNEQNEVIMGFYRQRSHDIIDMESCLIQDSQHQEVMNEVKSILKDLNVSIYQEQLKKGLMRHLVVRTGYHTDEMMIIFVTNGKKWPQKNAVVEKILDAFPNVTSIKQNINDSHSNVIMGRQSITLYGKDTIIDQLTDSTFKISDQSFYQINSEQTEKLYNKAIEYAQLTGNEVVLDTYCGIGTIGLYMAPLAKHVYGVEVVPSAIEDAQQNATINQCNNTTFVCGKAEEVILQWKAQGIKPDVVMVDPPRKGCDETFIQTLLTLEPKRIVYISCNPATQQRDALLLAEKYQLEEVTPVDMFPQTTHVETVALFNLK</sequence>
<name>Y1957_STAAC</name>
<keyword id="KW-0004">4Fe-4S</keyword>
<keyword id="KW-0408">Iron</keyword>
<keyword id="KW-0411">Iron-sulfur</keyword>
<keyword id="KW-0479">Metal-binding</keyword>
<keyword id="KW-0489">Methyltransferase</keyword>
<keyword id="KW-0949">S-adenosyl-L-methionine</keyword>
<keyword id="KW-0808">Transferase</keyword>
<gene>
    <name type="ordered locus">SACOL1957</name>
</gene>
<organism>
    <name type="scientific">Staphylococcus aureus (strain COL)</name>
    <dbReference type="NCBI Taxonomy" id="93062"/>
    <lineage>
        <taxon>Bacteria</taxon>
        <taxon>Bacillati</taxon>
        <taxon>Bacillota</taxon>
        <taxon>Bacilli</taxon>
        <taxon>Bacillales</taxon>
        <taxon>Staphylococcaceae</taxon>
        <taxon>Staphylococcus</taxon>
    </lineage>
</organism>
<dbReference type="EC" id="2.1.1.-"/>
<dbReference type="EMBL" id="CP000046">
    <property type="protein sequence ID" value="AAW38398.1"/>
    <property type="molecule type" value="Genomic_DNA"/>
</dbReference>
<dbReference type="SMR" id="Q5HEM5"/>
<dbReference type="KEGG" id="sac:SACOL1957"/>
<dbReference type="HOGENOM" id="CLU_014689_7_0_9"/>
<dbReference type="Proteomes" id="UP000000530">
    <property type="component" value="Chromosome"/>
</dbReference>
<dbReference type="GO" id="GO:0051539">
    <property type="term" value="F:4 iron, 4 sulfur cluster binding"/>
    <property type="evidence" value="ECO:0007669"/>
    <property type="project" value="UniProtKB-KW"/>
</dbReference>
<dbReference type="GO" id="GO:0046872">
    <property type="term" value="F:metal ion binding"/>
    <property type="evidence" value="ECO:0007669"/>
    <property type="project" value="UniProtKB-KW"/>
</dbReference>
<dbReference type="GO" id="GO:0070041">
    <property type="term" value="F:rRNA (uridine-C5-)-methyltransferase activity"/>
    <property type="evidence" value="ECO:0007669"/>
    <property type="project" value="TreeGrafter"/>
</dbReference>
<dbReference type="GO" id="GO:0070475">
    <property type="term" value="P:rRNA base methylation"/>
    <property type="evidence" value="ECO:0007669"/>
    <property type="project" value="TreeGrafter"/>
</dbReference>
<dbReference type="CDD" id="cd02440">
    <property type="entry name" value="AdoMet_MTases"/>
    <property type="match status" value="1"/>
</dbReference>
<dbReference type="FunFam" id="3.40.50.150:FF:000009">
    <property type="entry name" value="23S rRNA (Uracil(1939)-C(5))-methyltransferase RlmD"/>
    <property type="match status" value="1"/>
</dbReference>
<dbReference type="FunFam" id="2.40.50.140:FF:000097">
    <property type="entry name" value="23S rRNA (uracil(1939)-C(5))-methyltransferase RlmD"/>
    <property type="match status" value="1"/>
</dbReference>
<dbReference type="FunFam" id="2.40.50.1070:FF:000003">
    <property type="entry name" value="23S rRNA (Uracil-5-)-methyltransferase RumA"/>
    <property type="match status" value="1"/>
</dbReference>
<dbReference type="Gene3D" id="2.40.50.1070">
    <property type="match status" value="1"/>
</dbReference>
<dbReference type="Gene3D" id="2.40.50.140">
    <property type="entry name" value="Nucleic acid-binding proteins"/>
    <property type="match status" value="1"/>
</dbReference>
<dbReference type="Gene3D" id="3.40.50.150">
    <property type="entry name" value="Vaccinia Virus protein VP39"/>
    <property type="match status" value="1"/>
</dbReference>
<dbReference type="InterPro" id="IPR030390">
    <property type="entry name" value="MeTrfase_TrmA_AS"/>
</dbReference>
<dbReference type="InterPro" id="IPR030391">
    <property type="entry name" value="MeTrfase_TrmA_CS"/>
</dbReference>
<dbReference type="InterPro" id="IPR012340">
    <property type="entry name" value="NA-bd_OB-fold"/>
</dbReference>
<dbReference type="InterPro" id="IPR029063">
    <property type="entry name" value="SAM-dependent_MTases_sf"/>
</dbReference>
<dbReference type="InterPro" id="IPR010280">
    <property type="entry name" value="U5_MeTrfase_fam"/>
</dbReference>
<dbReference type="NCBIfam" id="TIGR00479">
    <property type="entry name" value="rumA"/>
    <property type="match status" value="1"/>
</dbReference>
<dbReference type="PANTHER" id="PTHR11061">
    <property type="entry name" value="RNA M5U METHYLTRANSFERASE"/>
    <property type="match status" value="1"/>
</dbReference>
<dbReference type="PANTHER" id="PTHR11061:SF30">
    <property type="entry name" value="TRNA (URACIL(54)-C(5))-METHYLTRANSFERASE"/>
    <property type="match status" value="1"/>
</dbReference>
<dbReference type="Pfam" id="PF05958">
    <property type="entry name" value="tRNA_U5-meth_tr"/>
    <property type="match status" value="1"/>
</dbReference>
<dbReference type="SUPFAM" id="SSF50249">
    <property type="entry name" value="Nucleic acid-binding proteins"/>
    <property type="match status" value="1"/>
</dbReference>
<dbReference type="SUPFAM" id="SSF53335">
    <property type="entry name" value="S-adenosyl-L-methionine-dependent methyltransferases"/>
    <property type="match status" value="1"/>
</dbReference>
<dbReference type="PROSITE" id="PS51687">
    <property type="entry name" value="SAM_MT_RNA_M5U"/>
    <property type="match status" value="1"/>
</dbReference>
<dbReference type="PROSITE" id="PS01230">
    <property type="entry name" value="TRMA_1"/>
    <property type="match status" value="1"/>
</dbReference>
<dbReference type="PROSITE" id="PS01231">
    <property type="entry name" value="TRMA_2"/>
    <property type="match status" value="1"/>
</dbReference>
<protein>
    <recommendedName>
        <fullName>Uncharacterized RNA methyltransferase SACOL1957</fullName>
        <ecNumber>2.1.1.-</ecNumber>
    </recommendedName>
</protein>
<proteinExistence type="inferred from homology"/>
<comment type="similarity">
    <text evidence="2">Belongs to the class I-like SAM-binding methyltransferase superfamily. RNA M5U methyltransferase family.</text>
</comment>
<feature type="chain" id="PRO_0000162015" description="Uncharacterized RNA methyltransferase SACOL1957">
    <location>
        <begin position="1"/>
        <end position="453"/>
    </location>
</feature>
<feature type="active site" description="Nucleophile" evidence="2">
    <location>
        <position position="411"/>
    </location>
</feature>
<feature type="binding site" evidence="1">
    <location>
        <position position="74"/>
    </location>
    <ligand>
        <name>[4Fe-4S] cluster</name>
        <dbReference type="ChEBI" id="CHEBI:49883"/>
    </ligand>
</feature>
<feature type="binding site" evidence="1">
    <location>
        <position position="80"/>
    </location>
    <ligand>
        <name>[4Fe-4S] cluster</name>
        <dbReference type="ChEBI" id="CHEBI:49883"/>
    </ligand>
</feature>
<feature type="binding site" evidence="1">
    <location>
        <position position="83"/>
    </location>
    <ligand>
        <name>[4Fe-4S] cluster</name>
        <dbReference type="ChEBI" id="CHEBI:49883"/>
    </ligand>
</feature>
<feature type="binding site" evidence="1">
    <location>
        <position position="162"/>
    </location>
    <ligand>
        <name>[4Fe-4S] cluster</name>
        <dbReference type="ChEBI" id="CHEBI:49883"/>
    </ligand>
</feature>
<feature type="binding site" evidence="2">
    <location>
        <position position="286"/>
    </location>
    <ligand>
        <name>S-adenosyl-L-methionine</name>
        <dbReference type="ChEBI" id="CHEBI:59789"/>
    </ligand>
</feature>
<feature type="binding site" evidence="2">
    <location>
        <position position="315"/>
    </location>
    <ligand>
        <name>S-adenosyl-L-methionine</name>
        <dbReference type="ChEBI" id="CHEBI:59789"/>
    </ligand>
</feature>
<feature type="binding site" evidence="2">
    <location>
        <position position="336"/>
    </location>
    <ligand>
        <name>S-adenosyl-L-methionine</name>
        <dbReference type="ChEBI" id="CHEBI:59789"/>
    </ligand>
</feature>
<feature type="binding site" evidence="2">
    <location>
        <position position="384"/>
    </location>
    <ligand>
        <name>S-adenosyl-L-methionine</name>
        <dbReference type="ChEBI" id="CHEBI:59789"/>
    </ligand>
</feature>
<evidence type="ECO:0000250" key="1"/>
<evidence type="ECO:0000255" key="2">
    <source>
        <dbReference type="PROSITE-ProRule" id="PRU01024"/>
    </source>
</evidence>
<reference key="1">
    <citation type="journal article" date="2005" name="J. Bacteriol.">
        <title>Insights on evolution of virulence and resistance from the complete genome analysis of an early methicillin-resistant Staphylococcus aureus strain and a biofilm-producing methicillin-resistant Staphylococcus epidermidis strain.</title>
        <authorList>
            <person name="Gill S.R."/>
            <person name="Fouts D.E."/>
            <person name="Archer G.L."/>
            <person name="Mongodin E.F."/>
            <person name="DeBoy R.T."/>
            <person name="Ravel J."/>
            <person name="Paulsen I.T."/>
            <person name="Kolonay J.F."/>
            <person name="Brinkac L.M."/>
            <person name="Beanan M.J."/>
            <person name="Dodson R.J."/>
            <person name="Daugherty S.C."/>
            <person name="Madupu R."/>
            <person name="Angiuoli S.V."/>
            <person name="Durkin A.S."/>
            <person name="Haft D.H."/>
            <person name="Vamathevan J.J."/>
            <person name="Khouri H."/>
            <person name="Utterback T.R."/>
            <person name="Lee C."/>
            <person name="Dimitrov G."/>
            <person name="Jiang L."/>
            <person name="Qin H."/>
            <person name="Weidman J."/>
            <person name="Tran K."/>
            <person name="Kang K.H."/>
            <person name="Hance I.R."/>
            <person name="Nelson K.E."/>
            <person name="Fraser C.M."/>
        </authorList>
    </citation>
    <scope>NUCLEOTIDE SEQUENCE [LARGE SCALE GENOMIC DNA]</scope>
    <source>
        <strain>COL</strain>
    </source>
</reference>
<accession>Q5HEM5</accession>